<keyword id="KW-0963">Cytoplasm</keyword>
<keyword id="KW-0342">GTP-binding</keyword>
<keyword id="KW-0378">Hydrolase</keyword>
<keyword id="KW-0460">Magnesium</keyword>
<keyword id="KW-0479">Metal-binding</keyword>
<keyword id="KW-0547">Nucleotide-binding</keyword>
<keyword id="KW-1185">Reference proteome</keyword>
<protein>
    <recommendedName>
        <fullName evidence="1">GTPase Obg</fullName>
        <ecNumber evidence="1">3.6.5.-</ecNumber>
    </recommendedName>
    <alternativeName>
        <fullName evidence="1">GTP-binding protein Obg</fullName>
    </alternativeName>
</protein>
<dbReference type="EC" id="3.6.5.-" evidence="1"/>
<dbReference type="EMBL" id="CP000725">
    <property type="protein sequence ID" value="ABV11093.1"/>
    <property type="molecule type" value="Genomic_DNA"/>
</dbReference>
<dbReference type="SMR" id="A8AWM9"/>
<dbReference type="STRING" id="467705.SGO_0893"/>
<dbReference type="KEGG" id="sgo:SGO_0893"/>
<dbReference type="eggNOG" id="COG0536">
    <property type="taxonomic scope" value="Bacteria"/>
</dbReference>
<dbReference type="HOGENOM" id="CLU_011747_2_1_9"/>
<dbReference type="Proteomes" id="UP000001131">
    <property type="component" value="Chromosome"/>
</dbReference>
<dbReference type="GO" id="GO:0005737">
    <property type="term" value="C:cytoplasm"/>
    <property type="evidence" value="ECO:0007669"/>
    <property type="project" value="UniProtKB-SubCell"/>
</dbReference>
<dbReference type="GO" id="GO:0005525">
    <property type="term" value="F:GTP binding"/>
    <property type="evidence" value="ECO:0007669"/>
    <property type="project" value="UniProtKB-UniRule"/>
</dbReference>
<dbReference type="GO" id="GO:0003924">
    <property type="term" value="F:GTPase activity"/>
    <property type="evidence" value="ECO:0007669"/>
    <property type="project" value="UniProtKB-UniRule"/>
</dbReference>
<dbReference type="GO" id="GO:0000287">
    <property type="term" value="F:magnesium ion binding"/>
    <property type="evidence" value="ECO:0007669"/>
    <property type="project" value="InterPro"/>
</dbReference>
<dbReference type="GO" id="GO:0042254">
    <property type="term" value="P:ribosome biogenesis"/>
    <property type="evidence" value="ECO:0007669"/>
    <property type="project" value="UniProtKB-UniRule"/>
</dbReference>
<dbReference type="CDD" id="cd01898">
    <property type="entry name" value="Obg"/>
    <property type="match status" value="1"/>
</dbReference>
<dbReference type="FunFam" id="2.70.210.12:FF:000001">
    <property type="entry name" value="GTPase Obg"/>
    <property type="match status" value="1"/>
</dbReference>
<dbReference type="FunFam" id="3.40.50.300:FF:000515">
    <property type="entry name" value="GTPase Obg"/>
    <property type="match status" value="1"/>
</dbReference>
<dbReference type="Gene3D" id="3.30.300.350">
    <property type="entry name" value="GTP-binding protein OBG, C-terminal domain"/>
    <property type="match status" value="1"/>
</dbReference>
<dbReference type="Gene3D" id="2.70.210.12">
    <property type="entry name" value="GTP1/OBG domain"/>
    <property type="match status" value="1"/>
</dbReference>
<dbReference type="Gene3D" id="3.40.50.300">
    <property type="entry name" value="P-loop containing nucleotide triphosphate hydrolases"/>
    <property type="match status" value="1"/>
</dbReference>
<dbReference type="HAMAP" id="MF_01454">
    <property type="entry name" value="GTPase_Obg"/>
    <property type="match status" value="1"/>
</dbReference>
<dbReference type="InterPro" id="IPR031167">
    <property type="entry name" value="G_OBG"/>
</dbReference>
<dbReference type="InterPro" id="IPR006073">
    <property type="entry name" value="GTP-bd"/>
</dbReference>
<dbReference type="InterPro" id="IPR014100">
    <property type="entry name" value="GTP-bd_Obg/CgtA"/>
</dbReference>
<dbReference type="InterPro" id="IPR036346">
    <property type="entry name" value="GTP-bd_prot_GTP1/OBG_C_sf"/>
</dbReference>
<dbReference type="InterPro" id="IPR006074">
    <property type="entry name" value="GTP1-OBG_CS"/>
</dbReference>
<dbReference type="InterPro" id="IPR006169">
    <property type="entry name" value="GTP1_OBG_dom"/>
</dbReference>
<dbReference type="InterPro" id="IPR036726">
    <property type="entry name" value="GTP1_OBG_dom_sf"/>
</dbReference>
<dbReference type="InterPro" id="IPR045086">
    <property type="entry name" value="OBG_GTPase"/>
</dbReference>
<dbReference type="InterPro" id="IPR015349">
    <property type="entry name" value="OCT_dom"/>
</dbReference>
<dbReference type="InterPro" id="IPR027417">
    <property type="entry name" value="P-loop_NTPase"/>
</dbReference>
<dbReference type="InterPro" id="IPR005225">
    <property type="entry name" value="Small_GTP-bd"/>
</dbReference>
<dbReference type="NCBIfam" id="TIGR02729">
    <property type="entry name" value="Obg_CgtA"/>
    <property type="match status" value="1"/>
</dbReference>
<dbReference type="NCBIfam" id="TIGR03595">
    <property type="entry name" value="Obg_CgtA_exten"/>
    <property type="match status" value="1"/>
</dbReference>
<dbReference type="NCBIfam" id="NF008954">
    <property type="entry name" value="PRK12296.1"/>
    <property type="match status" value="1"/>
</dbReference>
<dbReference type="NCBIfam" id="NF008955">
    <property type="entry name" value="PRK12297.1"/>
    <property type="match status" value="1"/>
</dbReference>
<dbReference type="NCBIfam" id="NF008956">
    <property type="entry name" value="PRK12299.1"/>
    <property type="match status" value="1"/>
</dbReference>
<dbReference type="NCBIfam" id="TIGR00231">
    <property type="entry name" value="small_GTP"/>
    <property type="match status" value="1"/>
</dbReference>
<dbReference type="PANTHER" id="PTHR11702">
    <property type="entry name" value="DEVELOPMENTALLY REGULATED GTP-BINDING PROTEIN-RELATED"/>
    <property type="match status" value="1"/>
</dbReference>
<dbReference type="PANTHER" id="PTHR11702:SF31">
    <property type="entry name" value="MITOCHONDRIAL RIBOSOME-ASSOCIATED GTPASE 2"/>
    <property type="match status" value="1"/>
</dbReference>
<dbReference type="Pfam" id="PF09269">
    <property type="entry name" value="DUF1967"/>
    <property type="match status" value="1"/>
</dbReference>
<dbReference type="Pfam" id="PF01018">
    <property type="entry name" value="GTP1_OBG"/>
    <property type="match status" value="1"/>
</dbReference>
<dbReference type="Pfam" id="PF01926">
    <property type="entry name" value="MMR_HSR1"/>
    <property type="match status" value="1"/>
</dbReference>
<dbReference type="PIRSF" id="PIRSF002401">
    <property type="entry name" value="GTP_bd_Obg/CgtA"/>
    <property type="match status" value="1"/>
</dbReference>
<dbReference type="PRINTS" id="PR00326">
    <property type="entry name" value="GTP1OBG"/>
</dbReference>
<dbReference type="SUPFAM" id="SSF102741">
    <property type="entry name" value="Obg GTP-binding protein C-terminal domain"/>
    <property type="match status" value="1"/>
</dbReference>
<dbReference type="SUPFAM" id="SSF82051">
    <property type="entry name" value="Obg GTP-binding protein N-terminal domain"/>
    <property type="match status" value="1"/>
</dbReference>
<dbReference type="SUPFAM" id="SSF52540">
    <property type="entry name" value="P-loop containing nucleoside triphosphate hydrolases"/>
    <property type="match status" value="1"/>
</dbReference>
<dbReference type="PROSITE" id="PS51710">
    <property type="entry name" value="G_OBG"/>
    <property type="match status" value="1"/>
</dbReference>
<dbReference type="PROSITE" id="PS00905">
    <property type="entry name" value="GTP1_OBG"/>
    <property type="match status" value="1"/>
</dbReference>
<dbReference type="PROSITE" id="PS51883">
    <property type="entry name" value="OBG"/>
    <property type="match status" value="1"/>
</dbReference>
<dbReference type="PROSITE" id="PS51881">
    <property type="entry name" value="OCT"/>
    <property type="match status" value="1"/>
</dbReference>
<feature type="chain" id="PRO_0000386295" description="GTPase Obg">
    <location>
        <begin position="1"/>
        <end position="436"/>
    </location>
</feature>
<feature type="domain" description="Obg" evidence="3">
    <location>
        <begin position="2"/>
        <end position="160"/>
    </location>
</feature>
<feature type="domain" description="OBG-type G" evidence="1">
    <location>
        <begin position="161"/>
        <end position="338"/>
    </location>
</feature>
<feature type="domain" description="OCT" evidence="2">
    <location>
        <begin position="358"/>
        <end position="436"/>
    </location>
</feature>
<feature type="binding site" evidence="1">
    <location>
        <begin position="167"/>
        <end position="174"/>
    </location>
    <ligand>
        <name>GTP</name>
        <dbReference type="ChEBI" id="CHEBI:37565"/>
    </ligand>
</feature>
<feature type="binding site" evidence="1">
    <location>
        <position position="174"/>
    </location>
    <ligand>
        <name>Mg(2+)</name>
        <dbReference type="ChEBI" id="CHEBI:18420"/>
    </ligand>
</feature>
<feature type="binding site" evidence="1">
    <location>
        <begin position="192"/>
        <end position="196"/>
    </location>
    <ligand>
        <name>GTP</name>
        <dbReference type="ChEBI" id="CHEBI:37565"/>
    </ligand>
</feature>
<feature type="binding site" evidence="1">
    <location>
        <position position="194"/>
    </location>
    <ligand>
        <name>Mg(2+)</name>
        <dbReference type="ChEBI" id="CHEBI:18420"/>
    </ligand>
</feature>
<feature type="binding site" evidence="1">
    <location>
        <begin position="214"/>
        <end position="217"/>
    </location>
    <ligand>
        <name>GTP</name>
        <dbReference type="ChEBI" id="CHEBI:37565"/>
    </ligand>
</feature>
<feature type="binding site" evidence="1">
    <location>
        <begin position="284"/>
        <end position="287"/>
    </location>
    <ligand>
        <name>GTP</name>
        <dbReference type="ChEBI" id="CHEBI:37565"/>
    </ligand>
</feature>
<feature type="binding site" evidence="1">
    <location>
        <begin position="319"/>
        <end position="321"/>
    </location>
    <ligand>
        <name>GTP</name>
        <dbReference type="ChEBI" id="CHEBI:37565"/>
    </ligand>
</feature>
<sequence>MSMFLDTAKIQVKAGNGGDGMVAFRREKYVPNGGPWGGDGGRGGNVVFVVDEGLRTLMDFRYNRHFKAQSGEKGMTKGMHGRGAEDLIVRVPQGTTVRDAETGKVLTDLVENGQEFIVARGGRGGRGNIRFATPKNPAPEISENGEPGQERELLLELKVLADVGLVGFPSVGKSTLLSVITAAKPKIGAYHFTTIVPNLGMVRTQSGESFAVADLPGLIEGASQGVGLGTQFLRHIERTRVILHVIDMSASEGRDPYEDYLAINKELESYNLRLMERPQIIVANKMDMPDSAENLKVFKEKLAANYDEFAELPQIFPISSLTKQGLATLLDATAELLDKTPEFLLYDESEMEEEAYYGFDEEAPAFEISRDDDATWVLSGDKLEKLFNMTNFDRDEAVMKFARQLRGMGVDEALRARGAKDGDLVRIGKFEFEFVD</sequence>
<proteinExistence type="inferred from homology"/>
<name>OBG_STRGC</name>
<accession>A8AWM9</accession>
<comment type="function">
    <text evidence="1">An essential GTPase which binds GTP, GDP and possibly (p)ppGpp with moderate affinity, with high nucleotide exchange rates and a fairly low GTP hydrolysis rate. Plays a role in control of the cell cycle, stress response, ribosome biogenesis and in those bacteria that undergo differentiation, in morphogenesis control.</text>
</comment>
<comment type="cofactor">
    <cofactor evidence="1">
        <name>Mg(2+)</name>
        <dbReference type="ChEBI" id="CHEBI:18420"/>
    </cofactor>
</comment>
<comment type="subunit">
    <text evidence="1">Monomer.</text>
</comment>
<comment type="subcellular location">
    <subcellularLocation>
        <location evidence="1">Cytoplasm</location>
    </subcellularLocation>
</comment>
<comment type="similarity">
    <text evidence="1">Belongs to the TRAFAC class OBG-HflX-like GTPase superfamily. OBG GTPase family.</text>
</comment>
<reference key="1">
    <citation type="journal article" date="2007" name="J. Bacteriol.">
        <title>Genome-wide transcriptional changes in Streptococcus gordonii in response to competence signaling peptide.</title>
        <authorList>
            <person name="Vickerman M.M."/>
            <person name="Iobst S."/>
            <person name="Jesionowski A.M."/>
            <person name="Gill S.R."/>
        </authorList>
    </citation>
    <scope>NUCLEOTIDE SEQUENCE [LARGE SCALE GENOMIC DNA]</scope>
    <source>
        <strain>Challis / ATCC 35105 / BCRC 15272 / CH1 / DL1 / V288</strain>
    </source>
</reference>
<organism>
    <name type="scientific">Streptococcus gordonii (strain Challis / ATCC 35105 / BCRC 15272 / CH1 / DL1 / V288)</name>
    <dbReference type="NCBI Taxonomy" id="467705"/>
    <lineage>
        <taxon>Bacteria</taxon>
        <taxon>Bacillati</taxon>
        <taxon>Bacillota</taxon>
        <taxon>Bacilli</taxon>
        <taxon>Lactobacillales</taxon>
        <taxon>Streptococcaceae</taxon>
        <taxon>Streptococcus</taxon>
    </lineage>
</organism>
<evidence type="ECO:0000255" key="1">
    <source>
        <dbReference type="HAMAP-Rule" id="MF_01454"/>
    </source>
</evidence>
<evidence type="ECO:0000255" key="2">
    <source>
        <dbReference type="PROSITE-ProRule" id="PRU01229"/>
    </source>
</evidence>
<evidence type="ECO:0000255" key="3">
    <source>
        <dbReference type="PROSITE-ProRule" id="PRU01231"/>
    </source>
</evidence>
<gene>
    <name evidence="1" type="primary">obg</name>
    <name type="ordered locus">SGO_0893</name>
</gene>